<feature type="chain" id="PRO_0000385946" description="GTPase Obg">
    <location>
        <begin position="1"/>
        <end position="541"/>
    </location>
</feature>
<feature type="domain" description="Obg" evidence="3">
    <location>
        <begin position="2"/>
        <end position="159"/>
    </location>
</feature>
<feature type="domain" description="OBG-type G" evidence="1">
    <location>
        <begin position="160"/>
        <end position="332"/>
    </location>
</feature>
<feature type="domain" description="OCT" evidence="2">
    <location>
        <begin position="350"/>
        <end position="427"/>
    </location>
</feature>
<feature type="region of interest" description="Disordered" evidence="4">
    <location>
        <begin position="63"/>
        <end position="84"/>
    </location>
</feature>
<feature type="region of interest" description="Disordered" evidence="4">
    <location>
        <begin position="497"/>
        <end position="541"/>
    </location>
</feature>
<feature type="compositionally biased region" description="Low complexity" evidence="4">
    <location>
        <begin position="517"/>
        <end position="527"/>
    </location>
</feature>
<feature type="compositionally biased region" description="Gly residues" evidence="4">
    <location>
        <begin position="528"/>
        <end position="541"/>
    </location>
</feature>
<feature type="binding site" evidence="1">
    <location>
        <begin position="166"/>
        <end position="173"/>
    </location>
    <ligand>
        <name>GTP</name>
        <dbReference type="ChEBI" id="CHEBI:37565"/>
    </ligand>
</feature>
<feature type="binding site" evidence="1">
    <location>
        <position position="173"/>
    </location>
    <ligand>
        <name>Mg(2+)</name>
        <dbReference type="ChEBI" id="CHEBI:18420"/>
    </ligand>
</feature>
<feature type="binding site" evidence="1">
    <location>
        <begin position="191"/>
        <end position="195"/>
    </location>
    <ligand>
        <name>GTP</name>
        <dbReference type="ChEBI" id="CHEBI:37565"/>
    </ligand>
</feature>
<feature type="binding site" evidence="1">
    <location>
        <position position="193"/>
    </location>
    <ligand>
        <name>Mg(2+)</name>
        <dbReference type="ChEBI" id="CHEBI:18420"/>
    </ligand>
</feature>
<feature type="binding site" evidence="1">
    <location>
        <begin position="213"/>
        <end position="216"/>
    </location>
    <ligand>
        <name>GTP</name>
        <dbReference type="ChEBI" id="CHEBI:37565"/>
    </ligand>
</feature>
<feature type="binding site" evidence="1">
    <location>
        <begin position="284"/>
        <end position="287"/>
    </location>
    <ligand>
        <name>GTP</name>
        <dbReference type="ChEBI" id="CHEBI:37565"/>
    </ligand>
</feature>
<feature type="binding site" evidence="1">
    <location>
        <begin position="313"/>
        <end position="315"/>
    </location>
    <ligand>
        <name>GTP</name>
        <dbReference type="ChEBI" id="CHEBI:37565"/>
    </ligand>
</feature>
<name>OBG_PARS2</name>
<gene>
    <name evidence="1" type="primary">obg</name>
    <name type="ordered locus">Franean1_5258</name>
</gene>
<reference key="1">
    <citation type="journal article" date="2007" name="Genome Res.">
        <title>Genome characteristics of facultatively symbiotic Frankia sp. strains reflect host range and host plant biogeography.</title>
        <authorList>
            <person name="Normand P."/>
            <person name="Lapierre P."/>
            <person name="Tisa L.S."/>
            <person name="Gogarten J.P."/>
            <person name="Alloisio N."/>
            <person name="Bagnarol E."/>
            <person name="Bassi C.A."/>
            <person name="Berry A.M."/>
            <person name="Bickhart D.M."/>
            <person name="Choisne N."/>
            <person name="Couloux A."/>
            <person name="Cournoyer B."/>
            <person name="Cruveiller S."/>
            <person name="Daubin V."/>
            <person name="Demange N."/>
            <person name="Francino M.P."/>
            <person name="Goltsman E."/>
            <person name="Huang Y."/>
            <person name="Kopp O.R."/>
            <person name="Labarre L."/>
            <person name="Lapidus A."/>
            <person name="Lavire C."/>
            <person name="Marechal J."/>
            <person name="Martinez M."/>
            <person name="Mastronunzio J.E."/>
            <person name="Mullin B.C."/>
            <person name="Niemann J."/>
            <person name="Pujic P."/>
            <person name="Rawnsley T."/>
            <person name="Rouy Z."/>
            <person name="Schenowitz C."/>
            <person name="Sellstedt A."/>
            <person name="Tavares F."/>
            <person name="Tomkins J.P."/>
            <person name="Vallenet D."/>
            <person name="Valverde C."/>
            <person name="Wall L.G."/>
            <person name="Wang Y."/>
            <person name="Medigue C."/>
            <person name="Benson D.R."/>
        </authorList>
    </citation>
    <scope>NUCLEOTIDE SEQUENCE [LARGE SCALE GENOMIC DNA]</scope>
    <source>
        <strain>EAN1pec</strain>
    </source>
</reference>
<evidence type="ECO:0000255" key="1">
    <source>
        <dbReference type="HAMAP-Rule" id="MF_01454"/>
    </source>
</evidence>
<evidence type="ECO:0000255" key="2">
    <source>
        <dbReference type="PROSITE-ProRule" id="PRU01229"/>
    </source>
</evidence>
<evidence type="ECO:0000255" key="3">
    <source>
        <dbReference type="PROSITE-ProRule" id="PRU01231"/>
    </source>
</evidence>
<evidence type="ECO:0000256" key="4">
    <source>
        <dbReference type="SAM" id="MobiDB-lite"/>
    </source>
</evidence>
<accession>A8L1V6</accession>
<protein>
    <recommendedName>
        <fullName evidence="1">GTPase Obg</fullName>
        <ecNumber evidence="1">3.6.5.-</ecNumber>
    </recommendedName>
    <alternativeName>
        <fullName evidence="1">GTP-binding protein Obg</fullName>
    </alternativeName>
</protein>
<organism>
    <name type="scientific">Parafrankia sp. (strain EAN1pec)</name>
    <dbReference type="NCBI Taxonomy" id="298653"/>
    <lineage>
        <taxon>Bacteria</taxon>
        <taxon>Bacillati</taxon>
        <taxon>Actinomycetota</taxon>
        <taxon>Actinomycetes</taxon>
        <taxon>Frankiales</taxon>
        <taxon>Frankiaceae</taxon>
        <taxon>Parafrankia</taxon>
    </lineage>
</organism>
<comment type="function">
    <text evidence="1">An essential GTPase which binds GTP, GDP and possibly (p)ppGpp with moderate affinity, with high nucleotide exchange rates and a fairly low GTP hydrolysis rate. Plays a role in control of the cell cycle, stress response, ribosome biogenesis and in those bacteria that undergo differentiation, in morphogenesis control.</text>
</comment>
<comment type="cofactor">
    <cofactor evidence="1">
        <name>Mg(2+)</name>
        <dbReference type="ChEBI" id="CHEBI:18420"/>
    </cofactor>
</comment>
<comment type="subunit">
    <text evidence="1">Monomer.</text>
</comment>
<comment type="subcellular location">
    <subcellularLocation>
        <location evidence="1">Cytoplasm</location>
    </subcellularLocation>
</comment>
<comment type="similarity">
    <text evidence="1">Belongs to the TRAFAC class OBG-HflX-like GTPase superfamily. OBG GTPase family.</text>
</comment>
<sequence>MPTFVDRVVLHAAAGDGGHGCCSIHREKFKPLGGPDGGNGGRGGNVLLRVDSGVTTLLDFHFHPHQRAGGGRPGQGSNRHGADGDDLVLSVPDGTVVLSPDGEQIVDLVGAGSTYVLAHGGRGGRGNASLASARRKAPGFAELGEPGEQLDAVLELKSVADVALVGFPSAGKSSLVSVLSAARPKIADYPFTTLVPNLGVVQAGDHRPFTVADVPGLIPGASQGRGLGLEFLRHIERCSLIVHVLDCATLEPGRDPLTDLDVIEAELAAYTTDLSDRPRLVVLNKVDVPDAAELAELVTPDLQARGLAVHQISTASRHGVRGLALALAELVASLRAAVPSPAATRIVLRPRAVDEPDFTVRAEGDGFVVGGTKPLRWVRQTDFSNEEAIGYLADRLARLGVEKELAKRGAFPGVAVTIGAVTFDWEPTLSGREALLAAGGGDGDGYGEAGYGAVDTAVTIATVGGSGGTRAGARGGAVVSDLPLGPRGTDLRLRTSKRLTRAQRTALSDSADDFDDGAGFSDSAAFGDSGGSGGDADGGRG</sequence>
<proteinExistence type="inferred from homology"/>
<keyword id="KW-0963">Cytoplasm</keyword>
<keyword id="KW-0342">GTP-binding</keyword>
<keyword id="KW-0378">Hydrolase</keyword>
<keyword id="KW-0460">Magnesium</keyword>
<keyword id="KW-0479">Metal-binding</keyword>
<keyword id="KW-0547">Nucleotide-binding</keyword>
<dbReference type="EC" id="3.6.5.-" evidence="1"/>
<dbReference type="EMBL" id="CP000820">
    <property type="protein sequence ID" value="ABW14616.1"/>
    <property type="molecule type" value="Genomic_DNA"/>
</dbReference>
<dbReference type="RefSeq" id="WP_020462728.1">
    <property type="nucleotide sequence ID" value="NC_009921.1"/>
</dbReference>
<dbReference type="SMR" id="A8L1V6"/>
<dbReference type="STRING" id="298653.Franean1_5258"/>
<dbReference type="KEGG" id="fre:Franean1_5258"/>
<dbReference type="eggNOG" id="COG0536">
    <property type="taxonomic scope" value="Bacteria"/>
</dbReference>
<dbReference type="HOGENOM" id="CLU_011747_1_3_11"/>
<dbReference type="GO" id="GO:0005737">
    <property type="term" value="C:cytoplasm"/>
    <property type="evidence" value="ECO:0007669"/>
    <property type="project" value="UniProtKB-SubCell"/>
</dbReference>
<dbReference type="GO" id="GO:0005525">
    <property type="term" value="F:GTP binding"/>
    <property type="evidence" value="ECO:0007669"/>
    <property type="project" value="UniProtKB-UniRule"/>
</dbReference>
<dbReference type="GO" id="GO:0003924">
    <property type="term" value="F:GTPase activity"/>
    <property type="evidence" value="ECO:0007669"/>
    <property type="project" value="UniProtKB-UniRule"/>
</dbReference>
<dbReference type="GO" id="GO:0000287">
    <property type="term" value="F:magnesium ion binding"/>
    <property type="evidence" value="ECO:0007669"/>
    <property type="project" value="InterPro"/>
</dbReference>
<dbReference type="GO" id="GO:0042254">
    <property type="term" value="P:ribosome biogenesis"/>
    <property type="evidence" value="ECO:0007669"/>
    <property type="project" value="UniProtKB-UniRule"/>
</dbReference>
<dbReference type="CDD" id="cd01898">
    <property type="entry name" value="Obg"/>
    <property type="match status" value="1"/>
</dbReference>
<dbReference type="FunFam" id="2.70.210.12:FF:000001">
    <property type="entry name" value="GTPase Obg"/>
    <property type="match status" value="1"/>
</dbReference>
<dbReference type="Gene3D" id="3.30.300.350">
    <property type="entry name" value="GTP-binding protein OBG, C-terminal domain"/>
    <property type="match status" value="1"/>
</dbReference>
<dbReference type="Gene3D" id="2.70.210.12">
    <property type="entry name" value="GTP1/OBG domain"/>
    <property type="match status" value="1"/>
</dbReference>
<dbReference type="Gene3D" id="3.40.50.300">
    <property type="entry name" value="P-loop containing nucleotide triphosphate hydrolases"/>
    <property type="match status" value="1"/>
</dbReference>
<dbReference type="HAMAP" id="MF_01454">
    <property type="entry name" value="GTPase_Obg"/>
    <property type="match status" value="1"/>
</dbReference>
<dbReference type="InterPro" id="IPR031167">
    <property type="entry name" value="G_OBG"/>
</dbReference>
<dbReference type="InterPro" id="IPR006073">
    <property type="entry name" value="GTP-bd"/>
</dbReference>
<dbReference type="InterPro" id="IPR014100">
    <property type="entry name" value="GTP-bd_Obg/CgtA"/>
</dbReference>
<dbReference type="InterPro" id="IPR036346">
    <property type="entry name" value="GTP-bd_prot_GTP1/OBG_C_sf"/>
</dbReference>
<dbReference type="InterPro" id="IPR006074">
    <property type="entry name" value="GTP1-OBG_CS"/>
</dbReference>
<dbReference type="InterPro" id="IPR006169">
    <property type="entry name" value="GTP1_OBG_dom"/>
</dbReference>
<dbReference type="InterPro" id="IPR036726">
    <property type="entry name" value="GTP1_OBG_dom_sf"/>
</dbReference>
<dbReference type="InterPro" id="IPR045086">
    <property type="entry name" value="OBG_GTPase"/>
</dbReference>
<dbReference type="InterPro" id="IPR015349">
    <property type="entry name" value="OCT_dom"/>
</dbReference>
<dbReference type="InterPro" id="IPR027417">
    <property type="entry name" value="P-loop_NTPase"/>
</dbReference>
<dbReference type="NCBIfam" id="TIGR02729">
    <property type="entry name" value="Obg_CgtA"/>
    <property type="match status" value="1"/>
</dbReference>
<dbReference type="NCBIfam" id="TIGR03595">
    <property type="entry name" value="Obg_CgtA_exten"/>
    <property type="match status" value="1"/>
</dbReference>
<dbReference type="NCBIfam" id="NF008954">
    <property type="entry name" value="PRK12296.1"/>
    <property type="match status" value="1"/>
</dbReference>
<dbReference type="NCBIfam" id="NF008955">
    <property type="entry name" value="PRK12297.1"/>
    <property type="match status" value="1"/>
</dbReference>
<dbReference type="NCBIfam" id="NF008956">
    <property type="entry name" value="PRK12299.1"/>
    <property type="match status" value="1"/>
</dbReference>
<dbReference type="PANTHER" id="PTHR11702">
    <property type="entry name" value="DEVELOPMENTALLY REGULATED GTP-BINDING PROTEIN-RELATED"/>
    <property type="match status" value="1"/>
</dbReference>
<dbReference type="PANTHER" id="PTHR11702:SF31">
    <property type="entry name" value="MITOCHONDRIAL RIBOSOME-ASSOCIATED GTPASE 2"/>
    <property type="match status" value="1"/>
</dbReference>
<dbReference type="Pfam" id="PF09269">
    <property type="entry name" value="DUF1967"/>
    <property type="match status" value="1"/>
</dbReference>
<dbReference type="Pfam" id="PF01018">
    <property type="entry name" value="GTP1_OBG"/>
    <property type="match status" value="1"/>
</dbReference>
<dbReference type="Pfam" id="PF01926">
    <property type="entry name" value="MMR_HSR1"/>
    <property type="match status" value="1"/>
</dbReference>
<dbReference type="PRINTS" id="PR00326">
    <property type="entry name" value="GTP1OBG"/>
</dbReference>
<dbReference type="SUPFAM" id="SSF102741">
    <property type="entry name" value="Obg GTP-binding protein C-terminal domain"/>
    <property type="match status" value="1"/>
</dbReference>
<dbReference type="SUPFAM" id="SSF82051">
    <property type="entry name" value="Obg GTP-binding protein N-terminal domain"/>
    <property type="match status" value="1"/>
</dbReference>
<dbReference type="SUPFAM" id="SSF52540">
    <property type="entry name" value="P-loop containing nucleoside triphosphate hydrolases"/>
    <property type="match status" value="1"/>
</dbReference>
<dbReference type="PROSITE" id="PS51710">
    <property type="entry name" value="G_OBG"/>
    <property type="match status" value="1"/>
</dbReference>
<dbReference type="PROSITE" id="PS00905">
    <property type="entry name" value="GTP1_OBG"/>
    <property type="match status" value="1"/>
</dbReference>
<dbReference type="PROSITE" id="PS51883">
    <property type="entry name" value="OBG"/>
    <property type="match status" value="1"/>
</dbReference>
<dbReference type="PROSITE" id="PS51881">
    <property type="entry name" value="OCT"/>
    <property type="match status" value="1"/>
</dbReference>